<comment type="function">
    <text evidence="1">One of the primary rRNA binding proteins, it binds specifically to the 5'-end of 16S ribosomal RNA.</text>
</comment>
<comment type="subunit">
    <text evidence="1">Part of the 30S ribosomal subunit.</text>
</comment>
<comment type="similarity">
    <text evidence="1">Belongs to the universal ribosomal protein uS17 family.</text>
</comment>
<evidence type="ECO:0000255" key="1">
    <source>
        <dbReference type="HAMAP-Rule" id="MF_01345"/>
    </source>
</evidence>
<evidence type="ECO:0000305" key="2"/>
<feature type="chain" id="PRO_0000233570" description="Small ribosomal subunit protein uS17">
    <location>
        <begin position="1"/>
        <end position="87"/>
    </location>
</feature>
<name>RS17_STAHJ</name>
<gene>
    <name evidence="1" type="primary">rpsQ</name>
    <name type="ordered locus">SH0811</name>
</gene>
<keyword id="KW-0687">Ribonucleoprotein</keyword>
<keyword id="KW-0689">Ribosomal protein</keyword>
<keyword id="KW-0694">RNA-binding</keyword>
<keyword id="KW-0699">rRNA-binding</keyword>
<sequence length="87" mass="10161">MSERNDRKVYVGKVVSDKMDKTITVLVETYKTHKLYGKRVKYSKKYKTHDENNSAKLGDIVKIQETRPLSASKRFRLVEIVEESVII</sequence>
<reference key="1">
    <citation type="journal article" date="2005" name="J. Bacteriol.">
        <title>Whole-genome sequencing of Staphylococcus haemolyticus uncovers the extreme plasticity of its genome and the evolution of human-colonizing staphylococcal species.</title>
        <authorList>
            <person name="Takeuchi F."/>
            <person name="Watanabe S."/>
            <person name="Baba T."/>
            <person name="Yuzawa H."/>
            <person name="Ito T."/>
            <person name="Morimoto Y."/>
            <person name="Kuroda M."/>
            <person name="Cui L."/>
            <person name="Takahashi M."/>
            <person name="Ankai A."/>
            <person name="Baba S."/>
            <person name="Fukui S."/>
            <person name="Lee J.C."/>
            <person name="Hiramatsu K."/>
        </authorList>
    </citation>
    <scope>NUCLEOTIDE SEQUENCE [LARGE SCALE GENOMIC DNA]</scope>
    <source>
        <strain>JCSC1435</strain>
    </source>
</reference>
<proteinExistence type="inferred from homology"/>
<dbReference type="EMBL" id="AP006716">
    <property type="protein sequence ID" value="BAE04120.1"/>
    <property type="molecule type" value="Genomic_DNA"/>
</dbReference>
<dbReference type="RefSeq" id="WP_011275131.1">
    <property type="nucleotide sequence ID" value="NC_007168.1"/>
</dbReference>
<dbReference type="SMR" id="Q4L8A5"/>
<dbReference type="GeneID" id="93780200"/>
<dbReference type="KEGG" id="sha:SH0811"/>
<dbReference type="eggNOG" id="COG0186">
    <property type="taxonomic scope" value="Bacteria"/>
</dbReference>
<dbReference type="HOGENOM" id="CLU_073626_1_0_9"/>
<dbReference type="OrthoDB" id="9811714at2"/>
<dbReference type="Proteomes" id="UP000000543">
    <property type="component" value="Chromosome"/>
</dbReference>
<dbReference type="GO" id="GO:0022627">
    <property type="term" value="C:cytosolic small ribosomal subunit"/>
    <property type="evidence" value="ECO:0007669"/>
    <property type="project" value="TreeGrafter"/>
</dbReference>
<dbReference type="GO" id="GO:0019843">
    <property type="term" value="F:rRNA binding"/>
    <property type="evidence" value="ECO:0007669"/>
    <property type="project" value="UniProtKB-UniRule"/>
</dbReference>
<dbReference type="GO" id="GO:0003735">
    <property type="term" value="F:structural constituent of ribosome"/>
    <property type="evidence" value="ECO:0007669"/>
    <property type="project" value="InterPro"/>
</dbReference>
<dbReference type="GO" id="GO:0006412">
    <property type="term" value="P:translation"/>
    <property type="evidence" value="ECO:0007669"/>
    <property type="project" value="UniProtKB-UniRule"/>
</dbReference>
<dbReference type="CDD" id="cd00364">
    <property type="entry name" value="Ribosomal_uS17"/>
    <property type="match status" value="1"/>
</dbReference>
<dbReference type="FunFam" id="2.40.50.140:FF:000026">
    <property type="entry name" value="30S ribosomal protein S17"/>
    <property type="match status" value="1"/>
</dbReference>
<dbReference type="Gene3D" id="2.40.50.140">
    <property type="entry name" value="Nucleic acid-binding proteins"/>
    <property type="match status" value="1"/>
</dbReference>
<dbReference type="HAMAP" id="MF_01345_B">
    <property type="entry name" value="Ribosomal_uS17_B"/>
    <property type="match status" value="1"/>
</dbReference>
<dbReference type="InterPro" id="IPR012340">
    <property type="entry name" value="NA-bd_OB-fold"/>
</dbReference>
<dbReference type="InterPro" id="IPR000266">
    <property type="entry name" value="Ribosomal_uS17"/>
</dbReference>
<dbReference type="InterPro" id="IPR019984">
    <property type="entry name" value="Ribosomal_uS17_bact/chlr"/>
</dbReference>
<dbReference type="InterPro" id="IPR019979">
    <property type="entry name" value="Ribosomal_uS17_CS"/>
</dbReference>
<dbReference type="NCBIfam" id="NF004123">
    <property type="entry name" value="PRK05610.1"/>
    <property type="match status" value="1"/>
</dbReference>
<dbReference type="NCBIfam" id="TIGR03635">
    <property type="entry name" value="uS17_bact"/>
    <property type="match status" value="1"/>
</dbReference>
<dbReference type="PANTHER" id="PTHR10744">
    <property type="entry name" value="40S RIBOSOMAL PROTEIN S11 FAMILY MEMBER"/>
    <property type="match status" value="1"/>
</dbReference>
<dbReference type="PANTHER" id="PTHR10744:SF1">
    <property type="entry name" value="SMALL RIBOSOMAL SUBUNIT PROTEIN US17M"/>
    <property type="match status" value="1"/>
</dbReference>
<dbReference type="Pfam" id="PF00366">
    <property type="entry name" value="Ribosomal_S17"/>
    <property type="match status" value="1"/>
</dbReference>
<dbReference type="PRINTS" id="PR00973">
    <property type="entry name" value="RIBOSOMALS17"/>
</dbReference>
<dbReference type="SUPFAM" id="SSF50249">
    <property type="entry name" value="Nucleic acid-binding proteins"/>
    <property type="match status" value="1"/>
</dbReference>
<dbReference type="PROSITE" id="PS00056">
    <property type="entry name" value="RIBOSOMAL_S17"/>
    <property type="match status" value="1"/>
</dbReference>
<organism>
    <name type="scientific">Staphylococcus haemolyticus (strain JCSC1435)</name>
    <dbReference type="NCBI Taxonomy" id="279808"/>
    <lineage>
        <taxon>Bacteria</taxon>
        <taxon>Bacillati</taxon>
        <taxon>Bacillota</taxon>
        <taxon>Bacilli</taxon>
        <taxon>Bacillales</taxon>
        <taxon>Staphylococcaceae</taxon>
        <taxon>Staphylococcus</taxon>
    </lineage>
</organism>
<accession>Q4L8A5</accession>
<protein>
    <recommendedName>
        <fullName evidence="1">Small ribosomal subunit protein uS17</fullName>
    </recommendedName>
    <alternativeName>
        <fullName evidence="2">30S ribosomal protein S17</fullName>
    </alternativeName>
</protein>